<evidence type="ECO:0000255" key="1">
    <source>
        <dbReference type="HAMAP-Rule" id="MF_00379"/>
    </source>
</evidence>
<name>MNME_STRA1</name>
<dbReference type="EC" id="3.6.-.-" evidence="1"/>
<dbReference type="EMBL" id="CP000114">
    <property type="protein sequence ID" value="ABA45718.1"/>
    <property type="molecule type" value="Genomic_DNA"/>
</dbReference>
<dbReference type="RefSeq" id="WP_000028893.1">
    <property type="nucleotide sequence ID" value="NC_007432.1"/>
</dbReference>
<dbReference type="SMR" id="Q3K1I2"/>
<dbReference type="KEGG" id="sak:SAK_0999"/>
<dbReference type="HOGENOM" id="CLU_019624_4_1_9"/>
<dbReference type="GO" id="GO:0005829">
    <property type="term" value="C:cytosol"/>
    <property type="evidence" value="ECO:0007669"/>
    <property type="project" value="TreeGrafter"/>
</dbReference>
<dbReference type="GO" id="GO:0005525">
    <property type="term" value="F:GTP binding"/>
    <property type="evidence" value="ECO:0007669"/>
    <property type="project" value="UniProtKB-UniRule"/>
</dbReference>
<dbReference type="GO" id="GO:0003924">
    <property type="term" value="F:GTPase activity"/>
    <property type="evidence" value="ECO:0007669"/>
    <property type="project" value="UniProtKB-UniRule"/>
</dbReference>
<dbReference type="GO" id="GO:0046872">
    <property type="term" value="F:metal ion binding"/>
    <property type="evidence" value="ECO:0007669"/>
    <property type="project" value="UniProtKB-KW"/>
</dbReference>
<dbReference type="GO" id="GO:0030488">
    <property type="term" value="P:tRNA methylation"/>
    <property type="evidence" value="ECO:0007669"/>
    <property type="project" value="TreeGrafter"/>
</dbReference>
<dbReference type="GO" id="GO:0002098">
    <property type="term" value="P:tRNA wobble uridine modification"/>
    <property type="evidence" value="ECO:0007669"/>
    <property type="project" value="TreeGrafter"/>
</dbReference>
<dbReference type="CDD" id="cd04164">
    <property type="entry name" value="trmE"/>
    <property type="match status" value="1"/>
</dbReference>
<dbReference type="CDD" id="cd14858">
    <property type="entry name" value="TrmE_N"/>
    <property type="match status" value="1"/>
</dbReference>
<dbReference type="FunFam" id="3.30.1360.120:FF:000003">
    <property type="entry name" value="tRNA modification GTPase MnmE"/>
    <property type="match status" value="1"/>
</dbReference>
<dbReference type="FunFam" id="3.40.50.300:FF:000494">
    <property type="entry name" value="tRNA modification GTPase MnmE"/>
    <property type="match status" value="1"/>
</dbReference>
<dbReference type="Gene3D" id="3.40.50.300">
    <property type="entry name" value="P-loop containing nucleotide triphosphate hydrolases"/>
    <property type="match status" value="1"/>
</dbReference>
<dbReference type="Gene3D" id="3.30.1360.120">
    <property type="entry name" value="Probable tRNA modification gtpase trme, domain 1"/>
    <property type="match status" value="1"/>
</dbReference>
<dbReference type="Gene3D" id="1.20.120.430">
    <property type="entry name" value="tRNA modification GTPase MnmE domain 2"/>
    <property type="match status" value="1"/>
</dbReference>
<dbReference type="HAMAP" id="MF_00379">
    <property type="entry name" value="GTPase_MnmE"/>
    <property type="match status" value="1"/>
</dbReference>
<dbReference type="InterPro" id="IPR031168">
    <property type="entry name" value="G_TrmE"/>
</dbReference>
<dbReference type="InterPro" id="IPR006073">
    <property type="entry name" value="GTP-bd"/>
</dbReference>
<dbReference type="InterPro" id="IPR018948">
    <property type="entry name" value="GTP-bd_TrmE_N"/>
</dbReference>
<dbReference type="InterPro" id="IPR004520">
    <property type="entry name" value="GTPase_MnmE"/>
</dbReference>
<dbReference type="InterPro" id="IPR027368">
    <property type="entry name" value="MnmE_dom2"/>
</dbReference>
<dbReference type="InterPro" id="IPR025867">
    <property type="entry name" value="MnmE_helical"/>
</dbReference>
<dbReference type="InterPro" id="IPR027417">
    <property type="entry name" value="P-loop_NTPase"/>
</dbReference>
<dbReference type="InterPro" id="IPR005225">
    <property type="entry name" value="Small_GTP-bd"/>
</dbReference>
<dbReference type="InterPro" id="IPR027266">
    <property type="entry name" value="TrmE/GcvT_dom1"/>
</dbReference>
<dbReference type="NCBIfam" id="TIGR00450">
    <property type="entry name" value="mnmE_trmE_thdF"/>
    <property type="match status" value="1"/>
</dbReference>
<dbReference type="NCBIfam" id="NF003661">
    <property type="entry name" value="PRK05291.1-3"/>
    <property type="match status" value="1"/>
</dbReference>
<dbReference type="NCBIfam" id="TIGR00231">
    <property type="entry name" value="small_GTP"/>
    <property type="match status" value="1"/>
</dbReference>
<dbReference type="PANTHER" id="PTHR42714">
    <property type="entry name" value="TRNA MODIFICATION GTPASE GTPBP3"/>
    <property type="match status" value="1"/>
</dbReference>
<dbReference type="PANTHER" id="PTHR42714:SF2">
    <property type="entry name" value="TRNA MODIFICATION GTPASE GTPBP3, MITOCHONDRIAL"/>
    <property type="match status" value="1"/>
</dbReference>
<dbReference type="Pfam" id="PF01926">
    <property type="entry name" value="MMR_HSR1"/>
    <property type="match status" value="1"/>
</dbReference>
<dbReference type="Pfam" id="PF12631">
    <property type="entry name" value="MnmE_helical"/>
    <property type="match status" value="1"/>
</dbReference>
<dbReference type="Pfam" id="PF10396">
    <property type="entry name" value="TrmE_N"/>
    <property type="match status" value="1"/>
</dbReference>
<dbReference type="SUPFAM" id="SSF52540">
    <property type="entry name" value="P-loop containing nucleoside triphosphate hydrolases"/>
    <property type="match status" value="1"/>
</dbReference>
<dbReference type="PROSITE" id="PS51709">
    <property type="entry name" value="G_TRME"/>
    <property type="match status" value="1"/>
</dbReference>
<organism>
    <name type="scientific">Streptococcus agalactiae serotype Ia (strain ATCC 27591 / A909 / CDC SS700)</name>
    <dbReference type="NCBI Taxonomy" id="205921"/>
    <lineage>
        <taxon>Bacteria</taxon>
        <taxon>Bacillati</taxon>
        <taxon>Bacillota</taxon>
        <taxon>Bacilli</taxon>
        <taxon>Lactobacillales</taxon>
        <taxon>Streptococcaceae</taxon>
        <taxon>Streptococcus</taxon>
    </lineage>
</organism>
<comment type="function">
    <text evidence="1">Exhibits a very high intrinsic GTPase hydrolysis rate. Involved in the addition of a carboxymethylaminomethyl (cmnm) group at the wobble position (U34) of certain tRNAs, forming tRNA-cmnm(5)s(2)U34.</text>
</comment>
<comment type="cofactor">
    <cofactor evidence="1">
        <name>K(+)</name>
        <dbReference type="ChEBI" id="CHEBI:29103"/>
    </cofactor>
    <text evidence="1">Binds 1 potassium ion per subunit.</text>
</comment>
<comment type="subunit">
    <text evidence="1">Homodimer. Heterotetramer of two MnmE and two MnmG subunits.</text>
</comment>
<comment type="subcellular location">
    <subcellularLocation>
        <location evidence="1">Cytoplasm</location>
    </subcellularLocation>
</comment>
<comment type="similarity">
    <text evidence="1">Belongs to the TRAFAC class TrmE-Era-EngA-EngB-Septin-like GTPase superfamily. TrmE GTPase family.</text>
</comment>
<proteinExistence type="inferred from homology"/>
<sequence length="458" mass="50903">MSITKEFDTIAAISTPLGEGAIGIVRISGTDALKIASKIYRGKDLSAIQSHTLNYGHIVDPDKNEILDEVMLGVMLAPKTFTREDVIEINTHGGIAVTNEILQLILRHGARMAEPGEFTKRAFLNGRVDLTQAEAVMDLIRAKTDKAMDIAVKQLDGSLKTLINNTRQEILNTLAQVEVNIDYPEYDDVEEMTTTLMREKTQEFQALMENLLRTARRGKILREGLSTAIIGRPNVGKSSLLNNLLREEKAIVTDIEGTTRDVIEEYVNIKGVPLKLVDTAGIRDTDDIVEKIGVERSKKALEEADLVLLVLNSSEPLTLQDRSLLELSKESNRIVLLNKTDLPQKIEVNELPKNVIPISVLENENIDKIEERINDIFFDNAGMVEHDATYLSNARHISLIEKAVDSLKAVNEGLELGMPVDLLQVDMTRTWEILGEITGDAAPDELITQLFSQFCLGK</sequence>
<protein>
    <recommendedName>
        <fullName evidence="1">tRNA modification GTPase MnmE</fullName>
        <ecNumber evidence="1">3.6.-.-</ecNumber>
    </recommendedName>
</protein>
<gene>
    <name evidence="1" type="primary">mnmE</name>
    <name evidence="1" type="synonym">trmE</name>
    <name type="ordered locus">SAK_0999</name>
</gene>
<keyword id="KW-0963">Cytoplasm</keyword>
<keyword id="KW-0342">GTP-binding</keyword>
<keyword id="KW-0378">Hydrolase</keyword>
<keyword id="KW-0460">Magnesium</keyword>
<keyword id="KW-0479">Metal-binding</keyword>
<keyword id="KW-0547">Nucleotide-binding</keyword>
<keyword id="KW-0630">Potassium</keyword>
<keyword id="KW-0819">tRNA processing</keyword>
<accession>Q3K1I2</accession>
<feature type="chain" id="PRO_1000048885" description="tRNA modification GTPase MnmE">
    <location>
        <begin position="1"/>
        <end position="458"/>
    </location>
</feature>
<feature type="domain" description="TrmE-type G">
    <location>
        <begin position="224"/>
        <end position="378"/>
    </location>
</feature>
<feature type="binding site" evidence="1">
    <location>
        <position position="26"/>
    </location>
    <ligand>
        <name>(6S)-5-formyl-5,6,7,8-tetrahydrofolate</name>
        <dbReference type="ChEBI" id="CHEBI:57457"/>
    </ligand>
</feature>
<feature type="binding site" evidence="1">
    <location>
        <position position="88"/>
    </location>
    <ligand>
        <name>(6S)-5-formyl-5,6,7,8-tetrahydrofolate</name>
        <dbReference type="ChEBI" id="CHEBI:57457"/>
    </ligand>
</feature>
<feature type="binding site" evidence="1">
    <location>
        <position position="127"/>
    </location>
    <ligand>
        <name>(6S)-5-formyl-5,6,7,8-tetrahydrofolate</name>
        <dbReference type="ChEBI" id="CHEBI:57457"/>
    </ligand>
</feature>
<feature type="binding site" evidence="1">
    <location>
        <begin position="234"/>
        <end position="239"/>
    </location>
    <ligand>
        <name>GTP</name>
        <dbReference type="ChEBI" id="CHEBI:37565"/>
    </ligand>
</feature>
<feature type="binding site" evidence="1">
    <location>
        <position position="234"/>
    </location>
    <ligand>
        <name>K(+)</name>
        <dbReference type="ChEBI" id="CHEBI:29103"/>
    </ligand>
</feature>
<feature type="binding site" evidence="1">
    <location>
        <position position="238"/>
    </location>
    <ligand>
        <name>Mg(2+)</name>
        <dbReference type="ChEBI" id="CHEBI:18420"/>
    </ligand>
</feature>
<feature type="binding site" evidence="1">
    <location>
        <begin position="253"/>
        <end position="259"/>
    </location>
    <ligand>
        <name>GTP</name>
        <dbReference type="ChEBI" id="CHEBI:37565"/>
    </ligand>
</feature>
<feature type="binding site" evidence="1">
    <location>
        <position position="253"/>
    </location>
    <ligand>
        <name>K(+)</name>
        <dbReference type="ChEBI" id="CHEBI:29103"/>
    </ligand>
</feature>
<feature type="binding site" evidence="1">
    <location>
        <position position="255"/>
    </location>
    <ligand>
        <name>K(+)</name>
        <dbReference type="ChEBI" id="CHEBI:29103"/>
    </ligand>
</feature>
<feature type="binding site" evidence="1">
    <location>
        <position position="258"/>
    </location>
    <ligand>
        <name>K(+)</name>
        <dbReference type="ChEBI" id="CHEBI:29103"/>
    </ligand>
</feature>
<feature type="binding site" evidence="1">
    <location>
        <position position="259"/>
    </location>
    <ligand>
        <name>Mg(2+)</name>
        <dbReference type="ChEBI" id="CHEBI:18420"/>
    </ligand>
</feature>
<feature type="binding site" evidence="1">
    <location>
        <begin position="278"/>
        <end position="281"/>
    </location>
    <ligand>
        <name>GTP</name>
        <dbReference type="ChEBI" id="CHEBI:37565"/>
    </ligand>
</feature>
<feature type="binding site" evidence="1">
    <location>
        <position position="458"/>
    </location>
    <ligand>
        <name>(6S)-5-formyl-5,6,7,8-tetrahydrofolate</name>
        <dbReference type="ChEBI" id="CHEBI:57457"/>
    </ligand>
</feature>
<reference key="1">
    <citation type="journal article" date="2005" name="Proc. Natl. Acad. Sci. U.S.A.">
        <title>Genome analysis of multiple pathogenic isolates of Streptococcus agalactiae: implications for the microbial 'pan-genome'.</title>
        <authorList>
            <person name="Tettelin H."/>
            <person name="Masignani V."/>
            <person name="Cieslewicz M.J."/>
            <person name="Donati C."/>
            <person name="Medini D."/>
            <person name="Ward N.L."/>
            <person name="Angiuoli S.V."/>
            <person name="Crabtree J."/>
            <person name="Jones A.L."/>
            <person name="Durkin A.S."/>
            <person name="DeBoy R.T."/>
            <person name="Davidsen T.M."/>
            <person name="Mora M."/>
            <person name="Scarselli M."/>
            <person name="Margarit y Ros I."/>
            <person name="Peterson J.D."/>
            <person name="Hauser C.R."/>
            <person name="Sundaram J.P."/>
            <person name="Nelson W.C."/>
            <person name="Madupu R."/>
            <person name="Brinkac L.M."/>
            <person name="Dodson R.J."/>
            <person name="Rosovitz M.J."/>
            <person name="Sullivan S.A."/>
            <person name="Daugherty S.C."/>
            <person name="Haft D.H."/>
            <person name="Selengut J."/>
            <person name="Gwinn M.L."/>
            <person name="Zhou L."/>
            <person name="Zafar N."/>
            <person name="Khouri H."/>
            <person name="Radune D."/>
            <person name="Dimitrov G."/>
            <person name="Watkins K."/>
            <person name="O'Connor K.J."/>
            <person name="Smith S."/>
            <person name="Utterback T.R."/>
            <person name="White O."/>
            <person name="Rubens C.E."/>
            <person name="Grandi G."/>
            <person name="Madoff L.C."/>
            <person name="Kasper D.L."/>
            <person name="Telford J.L."/>
            <person name="Wessels M.R."/>
            <person name="Rappuoli R."/>
            <person name="Fraser C.M."/>
        </authorList>
    </citation>
    <scope>NUCLEOTIDE SEQUENCE [LARGE SCALE GENOMIC DNA]</scope>
    <source>
        <strain>ATCC 27591 / A909 / CDC SS700</strain>
    </source>
</reference>